<dbReference type="EMBL" id="AL844504">
    <property type="protein sequence ID" value="CAD51386.1"/>
    <property type="molecule type" value="Genomic_DNA"/>
</dbReference>
<dbReference type="RefSeq" id="XP_001351579.1">
    <property type="nucleotide sequence ID" value="XM_001351543.1"/>
</dbReference>
<dbReference type="BioGRID" id="1208178">
    <property type="interactions" value="1"/>
</dbReference>
<dbReference type="FunCoup" id="Q8I480">
    <property type="interactions" value="343"/>
</dbReference>
<dbReference type="IntAct" id="Q8I480">
    <property type="interactions" value="1"/>
</dbReference>
<dbReference type="STRING" id="36329.Q8I480"/>
<dbReference type="PaxDb" id="5833-PFE0100w"/>
<dbReference type="EnsemblProtists" id="CAD51386">
    <property type="protein sequence ID" value="CAD51386"/>
    <property type="gene ID" value="PF3D7_0502000"/>
</dbReference>
<dbReference type="KEGG" id="pfa:PF3D7_0502000"/>
<dbReference type="VEuPathDB" id="PlasmoDB:PF3D7_0502000"/>
<dbReference type="HOGENOM" id="CLU_283940_0_0_1"/>
<dbReference type="InParanoid" id="Q8I480"/>
<dbReference type="OMA" id="FNDEHTM"/>
<dbReference type="OrthoDB" id="26184at2759"/>
<dbReference type="PhylomeDB" id="Q8I480"/>
<dbReference type="Proteomes" id="UP000001450">
    <property type="component" value="Chromosome 5"/>
</dbReference>
<dbReference type="GO" id="GO:0005768">
    <property type="term" value="C:endosome"/>
    <property type="evidence" value="ECO:0000318"/>
    <property type="project" value="GO_Central"/>
</dbReference>
<dbReference type="GO" id="GO:0030897">
    <property type="term" value="C:HOPS complex"/>
    <property type="evidence" value="ECO:0000318"/>
    <property type="project" value="GO_Central"/>
</dbReference>
<dbReference type="GO" id="GO:0016020">
    <property type="term" value="C:membrane"/>
    <property type="evidence" value="ECO:0000250"/>
    <property type="project" value="GeneDB"/>
</dbReference>
<dbReference type="GO" id="GO:0030674">
    <property type="term" value="F:protein-macromolecule adaptor activity"/>
    <property type="evidence" value="ECO:0000318"/>
    <property type="project" value="GO_Central"/>
</dbReference>
<dbReference type="GO" id="GO:0008270">
    <property type="term" value="F:zinc ion binding"/>
    <property type="evidence" value="ECO:0000250"/>
    <property type="project" value="GeneDB"/>
</dbReference>
<dbReference type="GO" id="GO:0007032">
    <property type="term" value="P:endosome organization"/>
    <property type="evidence" value="ECO:0000318"/>
    <property type="project" value="GO_Central"/>
</dbReference>
<dbReference type="GO" id="GO:0006886">
    <property type="term" value="P:intracellular protein transport"/>
    <property type="evidence" value="ECO:0000250"/>
    <property type="project" value="GeneDB"/>
</dbReference>
<dbReference type="GO" id="GO:0048284">
    <property type="term" value="P:organelle fusion"/>
    <property type="evidence" value="ECO:0000318"/>
    <property type="project" value="GO_Central"/>
</dbReference>
<dbReference type="GO" id="GO:0007033">
    <property type="term" value="P:vacuole organization"/>
    <property type="evidence" value="ECO:0000318"/>
    <property type="project" value="GO_Central"/>
</dbReference>
<dbReference type="GO" id="GO:0006904">
    <property type="term" value="P:vesicle docking involved in exocytosis"/>
    <property type="evidence" value="ECO:0000318"/>
    <property type="project" value="GO_Central"/>
</dbReference>
<dbReference type="GO" id="GO:0016192">
    <property type="term" value="P:vesicle-mediated transport"/>
    <property type="evidence" value="ECO:0000250"/>
    <property type="project" value="GeneDB"/>
</dbReference>
<dbReference type="CDD" id="cd16688">
    <property type="entry name" value="RING-H2_Vps11"/>
    <property type="match status" value="1"/>
</dbReference>
<dbReference type="Gene3D" id="3.30.40.10">
    <property type="entry name" value="Zinc/RING finger domain, C3HC4 (zinc finger)"/>
    <property type="match status" value="1"/>
</dbReference>
<dbReference type="InterPro" id="IPR000547">
    <property type="entry name" value="Clathrin_H-chain/VPS_repeat"/>
</dbReference>
<dbReference type="InterPro" id="IPR024763">
    <property type="entry name" value="VPS11_C"/>
</dbReference>
<dbReference type="InterPro" id="IPR001841">
    <property type="entry name" value="Znf_RING"/>
</dbReference>
<dbReference type="InterPro" id="IPR013083">
    <property type="entry name" value="Znf_RING/FYVE/PHD"/>
</dbReference>
<dbReference type="PANTHER" id="PTHR23323">
    <property type="entry name" value="VACUOLAR PROTEIN SORTING-ASSOCIATED PROTEIN"/>
    <property type="match status" value="1"/>
</dbReference>
<dbReference type="PANTHER" id="PTHR23323:SF24">
    <property type="entry name" value="VACUOLAR PROTEIN SORTING-ASSOCIATED PROTEIN 11 HOMOLOG"/>
    <property type="match status" value="1"/>
</dbReference>
<dbReference type="Pfam" id="PF12451">
    <property type="entry name" value="VPS11_C"/>
    <property type="match status" value="1"/>
</dbReference>
<dbReference type="SUPFAM" id="SSF57850">
    <property type="entry name" value="RING/U-box"/>
    <property type="match status" value="1"/>
</dbReference>
<dbReference type="PROSITE" id="PS50236">
    <property type="entry name" value="CHCR"/>
    <property type="match status" value="1"/>
</dbReference>
<dbReference type="PROSITE" id="PS50089">
    <property type="entry name" value="ZF_RING_2"/>
    <property type="match status" value="1"/>
</dbReference>
<organism>
    <name type="scientific">Plasmodium falciparum (isolate 3D7)</name>
    <dbReference type="NCBI Taxonomy" id="36329"/>
    <lineage>
        <taxon>Eukaryota</taxon>
        <taxon>Sar</taxon>
        <taxon>Alveolata</taxon>
        <taxon>Apicomplexa</taxon>
        <taxon>Aconoidasida</taxon>
        <taxon>Haemosporida</taxon>
        <taxon>Plasmodiidae</taxon>
        <taxon>Plasmodium</taxon>
        <taxon>Plasmodium (Laverania)</taxon>
    </lineage>
</organism>
<reference key="1">
    <citation type="journal article" date="2002" name="Nature">
        <title>Genome sequence of the human malaria parasite Plasmodium falciparum.</title>
        <authorList>
            <person name="Gardner M.J."/>
            <person name="Hall N."/>
            <person name="Fung E."/>
            <person name="White O."/>
            <person name="Berriman M."/>
            <person name="Hyman R.W."/>
            <person name="Carlton J.M."/>
            <person name="Pain A."/>
            <person name="Nelson K.E."/>
            <person name="Bowman S."/>
            <person name="Paulsen I.T."/>
            <person name="James K.D."/>
            <person name="Eisen J.A."/>
            <person name="Rutherford K.M."/>
            <person name="Salzberg S.L."/>
            <person name="Craig A."/>
            <person name="Kyes S."/>
            <person name="Chan M.-S."/>
            <person name="Nene V."/>
            <person name="Shallom S.J."/>
            <person name="Suh B."/>
            <person name="Peterson J."/>
            <person name="Angiuoli S."/>
            <person name="Pertea M."/>
            <person name="Allen J."/>
            <person name="Selengut J."/>
            <person name="Haft D."/>
            <person name="Mather M.W."/>
            <person name="Vaidya A.B."/>
            <person name="Martin D.M.A."/>
            <person name="Fairlamb A.H."/>
            <person name="Fraunholz M.J."/>
            <person name="Roos D.S."/>
            <person name="Ralph S.A."/>
            <person name="McFadden G.I."/>
            <person name="Cummings L.M."/>
            <person name="Subramanian G.M."/>
            <person name="Mungall C."/>
            <person name="Venter J.C."/>
            <person name="Carucci D.J."/>
            <person name="Hoffman S.L."/>
            <person name="Newbold C."/>
            <person name="Davis R.W."/>
            <person name="Fraser C.M."/>
            <person name="Barrell B.G."/>
        </authorList>
    </citation>
    <scope>NUCLEOTIDE SEQUENCE [LARGE SCALE GENOMIC DNA]</scope>
    <source>
        <strain>3D7</strain>
    </source>
</reference>
<reference key="2">
    <citation type="journal article" date="2002" name="Nature">
        <title>Sequence of Plasmodium falciparum chromosomes 1, 3-9 and 13.</title>
        <authorList>
            <person name="Hall N."/>
            <person name="Pain A."/>
            <person name="Berriman M."/>
            <person name="Churcher C.M."/>
            <person name="Harris B."/>
            <person name="Harris D."/>
            <person name="Mungall K.L."/>
            <person name="Bowman S."/>
            <person name="Atkin R."/>
            <person name="Baker S."/>
            <person name="Barron A."/>
            <person name="Brooks K."/>
            <person name="Buckee C.O."/>
            <person name="Burrows C."/>
            <person name="Cherevach I."/>
            <person name="Chillingworth C."/>
            <person name="Chillingworth T."/>
            <person name="Christodoulou Z."/>
            <person name="Clark L."/>
            <person name="Clark R."/>
            <person name="Corton C."/>
            <person name="Cronin A."/>
            <person name="Davies R.M."/>
            <person name="Davis P."/>
            <person name="Dear P."/>
            <person name="Dearden F."/>
            <person name="Doggett J."/>
            <person name="Feltwell T."/>
            <person name="Goble A."/>
            <person name="Goodhead I."/>
            <person name="Gwilliam R."/>
            <person name="Hamlin N."/>
            <person name="Hance Z."/>
            <person name="Harper D."/>
            <person name="Hauser H."/>
            <person name="Hornsby T."/>
            <person name="Holroyd S."/>
            <person name="Horrocks P."/>
            <person name="Humphray S."/>
            <person name="Jagels K."/>
            <person name="James K.D."/>
            <person name="Johnson D."/>
            <person name="Kerhornou A."/>
            <person name="Knights A."/>
            <person name="Konfortov B."/>
            <person name="Kyes S."/>
            <person name="Larke N."/>
            <person name="Lawson D."/>
            <person name="Lennard N."/>
            <person name="Line A."/>
            <person name="Maddison M."/>
            <person name="Mclean J."/>
            <person name="Mooney P."/>
            <person name="Moule S."/>
            <person name="Murphy L."/>
            <person name="Oliver K."/>
            <person name="Ormond D."/>
            <person name="Price C."/>
            <person name="Quail M.A."/>
            <person name="Rabbinowitsch E."/>
            <person name="Rajandream M.A."/>
            <person name="Rutter S."/>
            <person name="Rutherford K.M."/>
            <person name="Sanders M."/>
            <person name="Simmonds M."/>
            <person name="Seeger K."/>
            <person name="Sharp S."/>
            <person name="Smith R."/>
            <person name="Squares R."/>
            <person name="Squares S."/>
            <person name="Stevens K."/>
            <person name="Taylor K."/>
            <person name="Tivey A."/>
            <person name="Unwin L."/>
            <person name="Whitehead S."/>
            <person name="Woodward J.R."/>
            <person name="Sulston J.E."/>
            <person name="Craig A."/>
            <person name="Newbold C."/>
            <person name="Barrell B.G."/>
        </authorList>
    </citation>
    <scope>NUCLEOTIDE SEQUENCE [LARGE SCALE GENOMIC DNA]</scope>
    <source>
        <strain>3D7</strain>
    </source>
</reference>
<reference evidence="5" key="3">
    <citation type="journal article" date="2007" name="PLoS ONE">
        <title>Rapid identification of malaria vaccine candidates based on alpha-helical coiled coil protein motif.</title>
        <authorList>
            <person name="Villard V."/>
            <person name="Agak G.W."/>
            <person name="Frank G."/>
            <person name="Jafarshad A."/>
            <person name="Servis C."/>
            <person name="Nebie I."/>
            <person name="Sirima S.B."/>
            <person name="Felger I."/>
            <person name="Arevalo-Herrera M."/>
            <person name="Herrera S."/>
            <person name="Heitz F."/>
            <person name="Baecker V."/>
            <person name="Druilhe P."/>
            <person name="Kajava A.V."/>
            <person name="Corradin G."/>
        </authorList>
    </citation>
    <scope>SYNTHESIS OF 193-221</scope>
    <scope>POSSIBLE CANDIDATE MALARIA EPITOPE</scope>
</reference>
<gene>
    <name type="ORF">PFE0100w</name>
</gene>
<protein>
    <recommendedName>
        <fullName>RING finger protein PFE0100w</fullName>
    </recommendedName>
</protein>
<evidence type="ECO:0000255" key="1"/>
<evidence type="ECO:0000255" key="2">
    <source>
        <dbReference type="PROSITE-ProRule" id="PRU00175"/>
    </source>
</evidence>
<evidence type="ECO:0000256" key="3">
    <source>
        <dbReference type="SAM" id="MobiDB-lite"/>
    </source>
</evidence>
<evidence type="ECO:0000269" key="4">
    <source>
    </source>
</evidence>
<evidence type="ECO:0000305" key="5"/>
<accession>Q8I480</accession>
<comment type="subcellular location">
    <subcellularLocation>
        <location evidence="1">Membrane</location>
        <topology evidence="1">Single-pass membrane protein</topology>
    </subcellularLocation>
</comment>
<comment type="biotechnology">
    <text evidence="4">Possible candidate for an effective malaria vaccine as determined by epitope response in sera.</text>
</comment>
<feature type="chain" id="PRO_0000388770" description="RING finger protein PFE0100w">
    <location>
        <begin position="1"/>
        <end position="1272"/>
    </location>
</feature>
<feature type="transmembrane region" description="Helical" evidence="1">
    <location>
        <begin position="771"/>
        <end position="791"/>
    </location>
</feature>
<feature type="repeat" description="CHCR">
    <location>
        <begin position="608"/>
        <end position="752"/>
    </location>
</feature>
<feature type="zinc finger region" description="RING-type; atypical" evidence="2">
    <location>
        <begin position="1189"/>
        <end position="1224"/>
    </location>
</feature>
<feature type="region of interest" description="Disordered" evidence="3">
    <location>
        <begin position="216"/>
        <end position="260"/>
    </location>
</feature>
<feature type="region of interest" description="Disordered" evidence="3">
    <location>
        <begin position="842"/>
        <end position="862"/>
    </location>
</feature>
<feature type="region of interest" description="Disordered" evidence="3">
    <location>
        <begin position="908"/>
        <end position="970"/>
    </location>
</feature>
<feature type="coiled-coil region" evidence="1">
    <location>
        <begin position="1146"/>
        <end position="1182"/>
    </location>
</feature>
<feature type="compositionally biased region" description="Low complexity" evidence="3">
    <location>
        <begin position="234"/>
        <end position="260"/>
    </location>
</feature>
<feature type="compositionally biased region" description="Low complexity" evidence="3">
    <location>
        <begin position="850"/>
        <end position="861"/>
    </location>
</feature>
<feature type="compositionally biased region" description="Low complexity" evidence="3">
    <location>
        <begin position="909"/>
        <end position="956"/>
    </location>
</feature>
<feature type="compositionally biased region" description="Polar residues" evidence="3">
    <location>
        <begin position="957"/>
        <end position="967"/>
    </location>
</feature>
<proteinExistence type="evidence at protein level"/>
<sequence length="1272" mass="151643">MFNFRNLPLFDKDNSKDTDDIKNFINSYEGIYFSSSNKFINVFLDKILIIDPSSLNVITINTDLYVVDFLFNEKNKNLIVLGKGKNSLICSVYNIRECNFTLLKKIQLSKNINNIKKTLIAKCNEYIITLENKKITFYFLNKDYSINQSELIEDGKELIENIYLSKNHILLVIKNSYVYIYQLDIKNSHISYTLIDSFNLNLSYLRESINNKKKHINKINDVSNNDPKKDNNEKNTSSNNITHNNYNDISNNNNNNNNINGVKDHINNNTLENNDEPILSIYNEDLNVLYICQNMYNVLFVLNLNNLSFEFILLENKIINLFSCKFYLILLKEVNKKFFLHIYIIYEDMKLLVSTLLLNEPISNVIFFNNLFCLLIEEEISKPEIKVDKFYFYEQLKLKLHSKLDGDALKILKRDHVTNNINICKQEEKKYKLKNEQKDVEIYNKNNTVDSTNNTIYNSEVNHYKYITNDFFLNEDVNTDIKKELYNLNHTKDNINHDTLKKQTNQNDITMSLSKDEKNNDTNKFFNENMFTLNKFFKNCRNQIKIILKERNINEIINMFKKKKLYQWLIKYANLNKNYQIININFIHKIYADFLFEKEQYENAIYEYIQTINYLETSYVIHKYLNLDLYEYLTIYLEKLHVYHHFNDEHTMMLLSCYKKQCKKKKMISFIKKNKDKINLNKTYKFLLNAGYYNIVLNLSKKYKDHFTYVSILIEKYENYEKSLKYIFKLDVENICILLFKYGYKFIKYYPQLTIYLLKKIIKKYNINLTIFIPLFLDNIDFLFMFIVKFLDKNVNINKINHIQEKQKHHYSNMYHDSDELNSVTKQKNKINSFLLYEKDNNQNHNGIPSDSHNLSDDNNSQESTTAVNLINKTNLQLDIFNGEYDYILFVTVIQILLQKYKKSMQEENQTNNQSSKQTNNQSSKQTNKQSINQSNNQSINQTNNQSIKQTNIQTNKQKGNSTTNKIINKDETNEQNNILTFNIDKLIQNNKDKNINFLSVLLLSIYNYNKGLIYTSTQMNKYDISLLFSIHKFINNTKGKINKINMDEHKPNEQTMQINSSYKILNRNFQKVIYNICINHLKLNGSLSYNYIFYYLSMLNDEKYLIKFIKKIRQDMNLSIFNLIQILKKYNKSYSCIQNMVVAYMNDMNKNINDKCIEIEKDKKELEKIKKKQLKKKYNFYLIDNAYCSICKEILSVPMIHFLCKHSYHSYCLKDNNVCILCHNKDKEKKLLKEKAINSIQNFDEFFKYLQGSTDKFSYISNYLSYGITPK</sequence>
<keyword id="KW-0175">Coiled coil</keyword>
<keyword id="KW-0472">Membrane</keyword>
<keyword id="KW-0477">Merozoite</keyword>
<keyword id="KW-0479">Metal-binding</keyword>
<keyword id="KW-1185">Reference proteome</keyword>
<keyword id="KW-0812">Transmembrane</keyword>
<keyword id="KW-1133">Transmembrane helix</keyword>
<keyword id="KW-0862">Zinc</keyword>
<keyword id="KW-0863">Zinc-finger</keyword>
<name>ZNRF2_PLAF7</name>